<proteinExistence type="inferred from homology"/>
<reference key="1">
    <citation type="journal article" date="2000" name="Nature">
        <title>Sequence and analysis of chromosome 3 of the plant Arabidopsis thaliana.</title>
        <authorList>
            <person name="Salanoubat M."/>
            <person name="Lemcke K."/>
            <person name="Rieger M."/>
            <person name="Ansorge W."/>
            <person name="Unseld M."/>
            <person name="Fartmann B."/>
            <person name="Valle G."/>
            <person name="Bloecker H."/>
            <person name="Perez-Alonso M."/>
            <person name="Obermaier B."/>
            <person name="Delseny M."/>
            <person name="Boutry M."/>
            <person name="Grivell L.A."/>
            <person name="Mache R."/>
            <person name="Puigdomenech P."/>
            <person name="De Simone V."/>
            <person name="Choisne N."/>
            <person name="Artiguenave F."/>
            <person name="Robert C."/>
            <person name="Brottier P."/>
            <person name="Wincker P."/>
            <person name="Cattolico L."/>
            <person name="Weissenbach J."/>
            <person name="Saurin W."/>
            <person name="Quetier F."/>
            <person name="Schaefer M."/>
            <person name="Mueller-Auer S."/>
            <person name="Gabel C."/>
            <person name="Fuchs M."/>
            <person name="Benes V."/>
            <person name="Wurmbach E."/>
            <person name="Drzonek H."/>
            <person name="Erfle H."/>
            <person name="Jordan N."/>
            <person name="Bangert S."/>
            <person name="Wiedelmann R."/>
            <person name="Kranz H."/>
            <person name="Voss H."/>
            <person name="Holland R."/>
            <person name="Brandt P."/>
            <person name="Nyakatura G."/>
            <person name="Vezzi A."/>
            <person name="D'Angelo M."/>
            <person name="Pallavicini A."/>
            <person name="Toppo S."/>
            <person name="Simionati B."/>
            <person name="Conrad A."/>
            <person name="Hornischer K."/>
            <person name="Kauer G."/>
            <person name="Loehnert T.-H."/>
            <person name="Nordsiek G."/>
            <person name="Reichelt J."/>
            <person name="Scharfe M."/>
            <person name="Schoen O."/>
            <person name="Bargues M."/>
            <person name="Terol J."/>
            <person name="Climent J."/>
            <person name="Navarro P."/>
            <person name="Collado C."/>
            <person name="Perez-Perez A."/>
            <person name="Ottenwaelder B."/>
            <person name="Duchemin D."/>
            <person name="Cooke R."/>
            <person name="Laudie M."/>
            <person name="Berger-Llauro C."/>
            <person name="Purnelle B."/>
            <person name="Masuy D."/>
            <person name="de Haan M."/>
            <person name="Maarse A.C."/>
            <person name="Alcaraz J.-P."/>
            <person name="Cottet A."/>
            <person name="Casacuberta E."/>
            <person name="Monfort A."/>
            <person name="Argiriou A."/>
            <person name="Flores M."/>
            <person name="Liguori R."/>
            <person name="Vitale D."/>
            <person name="Mannhaupt G."/>
            <person name="Haase D."/>
            <person name="Schoof H."/>
            <person name="Rudd S."/>
            <person name="Zaccaria P."/>
            <person name="Mewes H.-W."/>
            <person name="Mayer K.F.X."/>
            <person name="Kaul S."/>
            <person name="Town C.D."/>
            <person name="Koo H.L."/>
            <person name="Tallon L.J."/>
            <person name="Jenkins J."/>
            <person name="Rooney T."/>
            <person name="Rizzo M."/>
            <person name="Walts A."/>
            <person name="Utterback T."/>
            <person name="Fujii C.Y."/>
            <person name="Shea T.P."/>
            <person name="Creasy T.H."/>
            <person name="Haas B."/>
            <person name="Maiti R."/>
            <person name="Wu D."/>
            <person name="Peterson J."/>
            <person name="Van Aken S."/>
            <person name="Pai G."/>
            <person name="Militscher J."/>
            <person name="Sellers P."/>
            <person name="Gill J.E."/>
            <person name="Feldblyum T.V."/>
            <person name="Preuss D."/>
            <person name="Lin X."/>
            <person name="Nierman W.C."/>
            <person name="Salzberg S.L."/>
            <person name="White O."/>
            <person name="Venter J.C."/>
            <person name="Fraser C.M."/>
            <person name="Kaneko T."/>
            <person name="Nakamura Y."/>
            <person name="Sato S."/>
            <person name="Kato T."/>
            <person name="Asamizu E."/>
            <person name="Sasamoto S."/>
            <person name="Kimura T."/>
            <person name="Idesawa K."/>
            <person name="Kawashima K."/>
            <person name="Kishida Y."/>
            <person name="Kiyokawa C."/>
            <person name="Kohara M."/>
            <person name="Matsumoto M."/>
            <person name="Matsuno A."/>
            <person name="Muraki A."/>
            <person name="Nakayama S."/>
            <person name="Nakazaki N."/>
            <person name="Shinpo S."/>
            <person name="Takeuchi C."/>
            <person name="Wada T."/>
            <person name="Watanabe A."/>
            <person name="Yamada M."/>
            <person name="Yasuda M."/>
            <person name="Tabata S."/>
        </authorList>
    </citation>
    <scope>NUCLEOTIDE SEQUENCE [LARGE SCALE GENOMIC DNA]</scope>
    <source>
        <strain>cv. Columbia</strain>
    </source>
</reference>
<reference key="2">
    <citation type="journal article" date="2017" name="Plant J.">
        <title>Araport11: a complete reannotation of the Arabidopsis thaliana reference genome.</title>
        <authorList>
            <person name="Cheng C.Y."/>
            <person name="Krishnakumar V."/>
            <person name="Chan A.P."/>
            <person name="Thibaud-Nissen F."/>
            <person name="Schobel S."/>
            <person name="Town C.D."/>
        </authorList>
    </citation>
    <scope>GENOME REANNOTATION</scope>
    <source>
        <strain>cv. Columbia</strain>
    </source>
</reference>
<reference key="3">
    <citation type="journal article" date="2007" name="Plant J.">
        <title>The TUMOROUS SHOOT DEVELOPMENT2 gene of Arabidopsis encoding a putative methyltransferase is required for cell adhesion and co-ordinated plant development.</title>
        <authorList>
            <person name="Krupkova E."/>
            <person name="Immerzeel P."/>
            <person name="Pauly M."/>
            <person name="Schmulling T."/>
        </authorList>
    </citation>
    <scope>GENE FAMILY</scope>
</reference>
<evidence type="ECO:0000255" key="1"/>
<evidence type="ECO:0000256" key="2">
    <source>
        <dbReference type="SAM" id="MobiDB-lite"/>
    </source>
</evidence>
<evidence type="ECO:0000305" key="3"/>
<sequence>MAFGRGRGNKRTSTSSYASTITMVIFVALCVFGVWMLSSNSVIPPQITQGSTRAAVAETERSDVSASSNGNDEPEPTKQESDEQQAFEDNPGKLPDDAVKSEDEQRKSAKEKSETTSSKTQTQETQQNNDDKISEEKEKDNGKENQTVQESEEGQMKKVVKEFEKEQKQQRDEDAGTQPKGTQGQEQGQGKEQPDVEQGNKQGQEQDSNTDVTFTDATKQEQPMETGQGETSETSKNEENGQPEEQNSGNEETGQQNEEKTTASEENGKGEKSMKDENGQQEEHTTAEEESGNKEEESTSKDENMEQQEERKDEKKHEQGSEASGFGSGIPKESAESQKSWKSQATESKDEKQRQTSESNTVERIMDGNAWVLCNATAGTDYIPCLDNEEAIMKLRSRRHFEHRERHCPEDPPTCLVPLPEGYKEAIKWPESRDKIWYHNVPHTKLAEVKGHQNWVKVTGEFLTFPGGGTQFIHGALHYIDFLQQSLKNIAWGKRTRVILDVGCGVASFGGFLFERDVIAMSLAPKDEHEAQVQFALERKIPAISAVMGSKRLPFPSRVFDLIHCARCRVPWHNEGGMLLLELNRMLRPGGYFVWSATPVYQKLEEDVQIWKEMSALTKSLCWELVTINKDKLNGIGAAIYQKPATNECYEKRKHNKPPLCKNNDDANAAWYVPLQACMHKVPTNVVERGSKWPVNWPRRLQTPPYWLNSSQMGIYGKPAPRDFTTDYEHWKHVVSKVYMNEIGISWSNVRNVMDMRAVYGGFAAALKDLQVWVMNVVNINSPDTLPIIYERGLFGIYHDWCESFSTYPRSYDLLHADHLFSKLRTRCNLVPVMAEVDRIVRPGGKLIVRDESNVIREVENMLKSLHWDVHLTFSKHQEGILSAQKGFWRPETSQ</sequence>
<protein>
    <recommendedName>
        <fullName>Probable methyltransferase PMT27</fullName>
        <ecNumber>2.1.1.-</ecNumber>
    </recommendedName>
</protein>
<gene>
    <name type="ordered locus">At3g51070</name>
    <name type="ORF">F24M12.110</name>
</gene>
<dbReference type="EC" id="2.1.1.-"/>
<dbReference type="EMBL" id="AL132980">
    <property type="protein sequence ID" value="CAB62629.1"/>
    <property type="molecule type" value="Genomic_DNA"/>
</dbReference>
<dbReference type="EMBL" id="CP002686">
    <property type="protein sequence ID" value="AEE78746.1"/>
    <property type="molecule type" value="Genomic_DNA"/>
</dbReference>
<dbReference type="PIR" id="T45738">
    <property type="entry name" value="T45738"/>
</dbReference>
<dbReference type="RefSeq" id="NP_190676.1">
    <property type="nucleotide sequence ID" value="NM_114967.2"/>
</dbReference>
<dbReference type="FunCoup" id="Q9SD39">
    <property type="interactions" value="34"/>
</dbReference>
<dbReference type="STRING" id="3702.Q9SD39"/>
<dbReference type="GlyGen" id="Q9SD39">
    <property type="glycosylation" value="3 sites"/>
</dbReference>
<dbReference type="PaxDb" id="3702-AT3G51070.1"/>
<dbReference type="ProteomicsDB" id="234988"/>
<dbReference type="EnsemblPlants" id="AT3G51070.1">
    <property type="protein sequence ID" value="AT3G51070.1"/>
    <property type="gene ID" value="AT3G51070"/>
</dbReference>
<dbReference type="GeneID" id="824271"/>
<dbReference type="Gramene" id="AT3G51070.1">
    <property type="protein sequence ID" value="AT3G51070.1"/>
    <property type="gene ID" value="AT3G51070"/>
</dbReference>
<dbReference type="KEGG" id="ath:AT3G51070"/>
<dbReference type="Araport" id="AT3G51070"/>
<dbReference type="TAIR" id="AT3G51070"/>
<dbReference type="eggNOG" id="ENOG502QQH0">
    <property type="taxonomic scope" value="Eukaryota"/>
</dbReference>
<dbReference type="HOGENOM" id="CLU_010485_1_1_1"/>
<dbReference type="InParanoid" id="Q9SD39"/>
<dbReference type="OMA" id="QNKPPMC"/>
<dbReference type="PhylomeDB" id="Q9SD39"/>
<dbReference type="PRO" id="PR:Q9SD39"/>
<dbReference type="Proteomes" id="UP000006548">
    <property type="component" value="Chromosome 3"/>
</dbReference>
<dbReference type="ExpressionAtlas" id="Q9SD39">
    <property type="expression patterns" value="baseline and differential"/>
</dbReference>
<dbReference type="GO" id="GO:0005789">
    <property type="term" value="C:endoplasmic reticulum membrane"/>
    <property type="evidence" value="ECO:0007669"/>
    <property type="project" value="UniProtKB-SubCell"/>
</dbReference>
<dbReference type="GO" id="GO:0008168">
    <property type="term" value="F:methyltransferase activity"/>
    <property type="evidence" value="ECO:0007669"/>
    <property type="project" value="UniProtKB-KW"/>
</dbReference>
<dbReference type="GO" id="GO:0032259">
    <property type="term" value="P:methylation"/>
    <property type="evidence" value="ECO:0007669"/>
    <property type="project" value="UniProtKB-KW"/>
</dbReference>
<dbReference type="CDD" id="cd02440">
    <property type="entry name" value="AdoMet_MTases"/>
    <property type="match status" value="1"/>
</dbReference>
<dbReference type="FunFam" id="3.40.50.150:FF:000084">
    <property type="entry name" value="probable methyltransferase PMT23"/>
    <property type="match status" value="1"/>
</dbReference>
<dbReference type="Gene3D" id="3.40.50.150">
    <property type="entry name" value="Vaccinia Virus protein VP39"/>
    <property type="match status" value="1"/>
</dbReference>
<dbReference type="InterPro" id="IPR004159">
    <property type="entry name" value="Put_SAM_MeTrfase"/>
</dbReference>
<dbReference type="InterPro" id="IPR029063">
    <property type="entry name" value="SAM-dependent_MTases_sf"/>
</dbReference>
<dbReference type="PANTHER" id="PTHR10108:SF1077">
    <property type="entry name" value="METHYLTRANSFERASE PMT27-RELATED"/>
    <property type="match status" value="1"/>
</dbReference>
<dbReference type="PANTHER" id="PTHR10108">
    <property type="entry name" value="SAM-DEPENDENT METHYLTRANSFERASE"/>
    <property type="match status" value="1"/>
</dbReference>
<dbReference type="Pfam" id="PF03141">
    <property type="entry name" value="Methyltransf_29"/>
    <property type="match status" value="1"/>
</dbReference>
<dbReference type="SUPFAM" id="SSF53335">
    <property type="entry name" value="S-adenosyl-L-methionine-dependent methyltransferases"/>
    <property type="match status" value="2"/>
</dbReference>
<accession>Q9SD39</accession>
<comment type="subcellular location">
    <subcellularLocation>
        <location evidence="3">Endoplasmic reticulum membrane</location>
        <topology evidence="3">Single-pass type II membrane protein</topology>
    </subcellularLocation>
</comment>
<comment type="miscellaneous">
    <text>This gene overlaps with At3g51075, a potential natural antisense gene.</text>
</comment>
<comment type="similarity">
    <text evidence="3">Belongs to the methyltransferase superfamily.</text>
</comment>
<name>PMTR_ARATH</name>
<keyword id="KW-0256">Endoplasmic reticulum</keyword>
<keyword id="KW-0325">Glycoprotein</keyword>
<keyword id="KW-0472">Membrane</keyword>
<keyword id="KW-0489">Methyltransferase</keyword>
<keyword id="KW-1185">Reference proteome</keyword>
<keyword id="KW-0735">Signal-anchor</keyword>
<keyword id="KW-0808">Transferase</keyword>
<keyword id="KW-0812">Transmembrane</keyword>
<keyword id="KW-1133">Transmembrane helix</keyword>
<feature type="chain" id="PRO_0000393267" description="Probable methyltransferase PMT27">
    <location>
        <begin position="1"/>
        <end position="895"/>
    </location>
</feature>
<feature type="topological domain" description="Cytoplasmic" evidence="1">
    <location>
        <begin position="1"/>
        <end position="16"/>
    </location>
</feature>
<feature type="transmembrane region" description="Helical; Signal-anchor for type II membrane protein" evidence="1">
    <location>
        <begin position="17"/>
        <end position="37"/>
    </location>
</feature>
<feature type="topological domain" description="Lumenal" evidence="1">
    <location>
        <begin position="38"/>
        <end position="895"/>
    </location>
</feature>
<feature type="region of interest" description="Disordered" evidence="2">
    <location>
        <begin position="43"/>
        <end position="362"/>
    </location>
</feature>
<feature type="compositionally biased region" description="Polar residues" evidence="2">
    <location>
        <begin position="43"/>
        <end position="52"/>
    </location>
</feature>
<feature type="compositionally biased region" description="Basic and acidic residues" evidence="2">
    <location>
        <begin position="90"/>
        <end position="114"/>
    </location>
</feature>
<feature type="compositionally biased region" description="Low complexity" evidence="2">
    <location>
        <begin position="115"/>
        <end position="127"/>
    </location>
</feature>
<feature type="compositionally biased region" description="Basic and acidic residues" evidence="2">
    <location>
        <begin position="129"/>
        <end position="143"/>
    </location>
</feature>
<feature type="compositionally biased region" description="Basic and acidic residues" evidence="2">
    <location>
        <begin position="154"/>
        <end position="174"/>
    </location>
</feature>
<feature type="compositionally biased region" description="Low complexity" evidence="2">
    <location>
        <begin position="176"/>
        <end position="191"/>
    </location>
</feature>
<feature type="compositionally biased region" description="Polar residues" evidence="2">
    <location>
        <begin position="199"/>
        <end position="232"/>
    </location>
</feature>
<feature type="compositionally biased region" description="Polar residues" evidence="2">
    <location>
        <begin position="243"/>
        <end position="256"/>
    </location>
</feature>
<feature type="compositionally biased region" description="Basic and acidic residues" evidence="2">
    <location>
        <begin position="257"/>
        <end position="320"/>
    </location>
</feature>
<feature type="compositionally biased region" description="Polar residues" evidence="2">
    <location>
        <begin position="337"/>
        <end position="346"/>
    </location>
</feature>
<feature type="glycosylation site" description="N-linked (GlcNAc...) asparagine" evidence="1">
    <location>
        <position position="145"/>
    </location>
</feature>
<feature type="glycosylation site" description="N-linked (GlcNAc...) asparagine" evidence="1">
    <location>
        <position position="375"/>
    </location>
</feature>
<feature type="glycosylation site" description="N-linked (GlcNAc...) asparagine" evidence="1">
    <location>
        <position position="709"/>
    </location>
</feature>
<organism>
    <name type="scientific">Arabidopsis thaliana</name>
    <name type="common">Mouse-ear cress</name>
    <dbReference type="NCBI Taxonomy" id="3702"/>
    <lineage>
        <taxon>Eukaryota</taxon>
        <taxon>Viridiplantae</taxon>
        <taxon>Streptophyta</taxon>
        <taxon>Embryophyta</taxon>
        <taxon>Tracheophyta</taxon>
        <taxon>Spermatophyta</taxon>
        <taxon>Magnoliopsida</taxon>
        <taxon>eudicotyledons</taxon>
        <taxon>Gunneridae</taxon>
        <taxon>Pentapetalae</taxon>
        <taxon>rosids</taxon>
        <taxon>malvids</taxon>
        <taxon>Brassicales</taxon>
        <taxon>Brassicaceae</taxon>
        <taxon>Camelineae</taxon>
        <taxon>Arabidopsis</taxon>
    </lineage>
</organism>